<sequence length="172" mass="19695">MKLGPGKKAPDEINVFIEIPMGSNIKYEYDEEEDIIKVDRVLYTSMVYPFNYGFIPETLEEDGDPLDVLVLGNYSLMPGTVIEARPIGMIYMRDEEGEDAKVIAVPRNKTDPSFSNINDVKDLPEAIRNKIVHFFEHYKELEPNKWVKISGWGSVAEAKERIKKAIERKKQG</sequence>
<reference key="1">
    <citation type="journal article" date="2001" name="Proc. Natl. Acad. Sci. U.S.A.">
        <title>The complete genome of the crenarchaeon Sulfolobus solfataricus P2.</title>
        <authorList>
            <person name="She Q."/>
            <person name="Singh R.K."/>
            <person name="Confalonieri F."/>
            <person name="Zivanovic Y."/>
            <person name="Allard G."/>
            <person name="Awayez M.J."/>
            <person name="Chan-Weiher C.C.-Y."/>
            <person name="Clausen I.G."/>
            <person name="Curtis B.A."/>
            <person name="De Moors A."/>
            <person name="Erauso G."/>
            <person name="Fletcher C."/>
            <person name="Gordon P.M.K."/>
            <person name="Heikamp-de Jong I."/>
            <person name="Jeffries A.C."/>
            <person name="Kozera C.J."/>
            <person name="Medina N."/>
            <person name="Peng X."/>
            <person name="Thi-Ngoc H.P."/>
            <person name="Redder P."/>
            <person name="Schenk M.E."/>
            <person name="Theriault C."/>
            <person name="Tolstrup N."/>
            <person name="Charlebois R.L."/>
            <person name="Doolittle W.F."/>
            <person name="Duguet M."/>
            <person name="Gaasterland T."/>
            <person name="Garrett R.A."/>
            <person name="Ragan M.A."/>
            <person name="Sensen C.W."/>
            <person name="Van der Oost J."/>
        </authorList>
    </citation>
    <scope>NUCLEOTIDE SEQUENCE [LARGE SCALE GENOMIC DNA]</scope>
    <source>
        <strain>ATCC 35092 / DSM 1617 / JCM 11322 / P2</strain>
    </source>
</reference>
<feature type="chain" id="PRO_0000137560" description="Inorganic pyrophosphatase">
    <location>
        <begin position="1"/>
        <end position="172"/>
    </location>
</feature>
<feature type="binding site" evidence="1">
    <location>
        <position position="26"/>
    </location>
    <ligand>
        <name>substrate</name>
    </ligand>
</feature>
<feature type="binding site" evidence="1">
    <location>
        <position position="40"/>
    </location>
    <ligand>
        <name>substrate</name>
    </ligand>
</feature>
<feature type="binding site" evidence="1">
    <location>
        <position position="52"/>
    </location>
    <ligand>
        <name>substrate</name>
    </ligand>
</feature>
<feature type="binding site" evidence="1">
    <location>
        <position position="62"/>
    </location>
    <ligand>
        <name>Mg(2+)</name>
        <dbReference type="ChEBI" id="CHEBI:18420"/>
        <label>1</label>
    </ligand>
</feature>
<feature type="binding site" evidence="1">
    <location>
        <position position="67"/>
    </location>
    <ligand>
        <name>Mg(2+)</name>
        <dbReference type="ChEBI" id="CHEBI:18420"/>
        <label>1</label>
    </ligand>
</feature>
<feature type="binding site" evidence="1">
    <location>
        <position position="67"/>
    </location>
    <ligand>
        <name>Mg(2+)</name>
        <dbReference type="ChEBI" id="CHEBI:18420"/>
        <label>2</label>
    </ligand>
</feature>
<feature type="binding site" evidence="1">
    <location>
        <position position="99"/>
    </location>
    <ligand>
        <name>Mg(2+)</name>
        <dbReference type="ChEBI" id="CHEBI:18420"/>
        <label>1</label>
    </ligand>
</feature>
<feature type="binding site" evidence="1">
    <location>
        <position position="138"/>
    </location>
    <ligand>
        <name>substrate</name>
    </ligand>
</feature>
<name>IPYR_SACS2</name>
<organism>
    <name type="scientific">Saccharolobus solfataricus (strain ATCC 35092 / DSM 1617 / JCM 11322 / P2)</name>
    <name type="common">Sulfolobus solfataricus</name>
    <dbReference type="NCBI Taxonomy" id="273057"/>
    <lineage>
        <taxon>Archaea</taxon>
        <taxon>Thermoproteota</taxon>
        <taxon>Thermoprotei</taxon>
        <taxon>Sulfolobales</taxon>
        <taxon>Sulfolobaceae</taxon>
        <taxon>Saccharolobus</taxon>
    </lineage>
</organism>
<keyword id="KW-0963">Cytoplasm</keyword>
<keyword id="KW-0378">Hydrolase</keyword>
<keyword id="KW-0460">Magnesium</keyword>
<keyword id="KW-0479">Metal-binding</keyword>
<keyword id="KW-1185">Reference proteome</keyword>
<accession>Q97W51</accession>
<proteinExistence type="inferred from homology"/>
<gene>
    <name evidence="1" type="primary">ppa</name>
    <name type="ordered locus">SSO2390</name>
</gene>
<comment type="function">
    <text evidence="1">Catalyzes the hydrolysis of inorganic pyrophosphate (PPi) forming two phosphate ions.</text>
</comment>
<comment type="catalytic activity">
    <reaction evidence="1">
        <text>diphosphate + H2O = 2 phosphate + H(+)</text>
        <dbReference type="Rhea" id="RHEA:24576"/>
        <dbReference type="ChEBI" id="CHEBI:15377"/>
        <dbReference type="ChEBI" id="CHEBI:15378"/>
        <dbReference type="ChEBI" id="CHEBI:33019"/>
        <dbReference type="ChEBI" id="CHEBI:43474"/>
        <dbReference type="EC" id="3.6.1.1"/>
    </reaction>
</comment>
<comment type="cofactor">
    <cofactor evidence="1">
        <name>Mg(2+)</name>
        <dbReference type="ChEBI" id="CHEBI:18420"/>
    </cofactor>
</comment>
<comment type="subunit">
    <text evidence="1">Homohexamer.</text>
</comment>
<comment type="subcellular location">
    <subcellularLocation>
        <location evidence="1">Cytoplasm</location>
    </subcellularLocation>
</comment>
<comment type="similarity">
    <text evidence="1">Belongs to the PPase family.</text>
</comment>
<dbReference type="EC" id="3.6.1.1" evidence="1"/>
<dbReference type="EMBL" id="AE006641">
    <property type="protein sequence ID" value="AAK42538.1"/>
    <property type="molecule type" value="Genomic_DNA"/>
</dbReference>
<dbReference type="PIR" id="C90410">
    <property type="entry name" value="C90410"/>
</dbReference>
<dbReference type="RefSeq" id="WP_009989450.1">
    <property type="nucleotide sequence ID" value="NC_002754.1"/>
</dbReference>
<dbReference type="SMR" id="Q97W51"/>
<dbReference type="FunCoup" id="Q97W51">
    <property type="interactions" value="123"/>
</dbReference>
<dbReference type="STRING" id="273057.SSO2390"/>
<dbReference type="PaxDb" id="273057-SSO2390"/>
<dbReference type="EnsemblBacteria" id="AAK42538">
    <property type="protein sequence ID" value="AAK42538"/>
    <property type="gene ID" value="SSO2390"/>
</dbReference>
<dbReference type="GeneID" id="44128113"/>
<dbReference type="KEGG" id="sso:SSO2390"/>
<dbReference type="PATRIC" id="fig|273057.12.peg.2473"/>
<dbReference type="eggNOG" id="arCOG01711">
    <property type="taxonomic scope" value="Archaea"/>
</dbReference>
<dbReference type="HOGENOM" id="CLU_073198_1_0_2"/>
<dbReference type="InParanoid" id="Q97W51"/>
<dbReference type="PhylomeDB" id="Q97W51"/>
<dbReference type="Proteomes" id="UP000001974">
    <property type="component" value="Chromosome"/>
</dbReference>
<dbReference type="GO" id="GO:0005829">
    <property type="term" value="C:cytosol"/>
    <property type="evidence" value="ECO:0000318"/>
    <property type="project" value="GO_Central"/>
</dbReference>
<dbReference type="GO" id="GO:0004427">
    <property type="term" value="F:inorganic diphosphate phosphatase activity"/>
    <property type="evidence" value="ECO:0000318"/>
    <property type="project" value="GO_Central"/>
</dbReference>
<dbReference type="GO" id="GO:0000287">
    <property type="term" value="F:magnesium ion binding"/>
    <property type="evidence" value="ECO:0000318"/>
    <property type="project" value="GO_Central"/>
</dbReference>
<dbReference type="GO" id="GO:0006796">
    <property type="term" value="P:phosphate-containing compound metabolic process"/>
    <property type="evidence" value="ECO:0000318"/>
    <property type="project" value="GO_Central"/>
</dbReference>
<dbReference type="CDD" id="cd00412">
    <property type="entry name" value="pyrophosphatase"/>
    <property type="match status" value="1"/>
</dbReference>
<dbReference type="FunFam" id="3.90.80.10:FF:000003">
    <property type="entry name" value="Inorganic pyrophosphatase"/>
    <property type="match status" value="1"/>
</dbReference>
<dbReference type="Gene3D" id="3.90.80.10">
    <property type="entry name" value="Inorganic pyrophosphatase"/>
    <property type="match status" value="1"/>
</dbReference>
<dbReference type="HAMAP" id="MF_00209">
    <property type="entry name" value="Inorganic_PPase"/>
    <property type="match status" value="1"/>
</dbReference>
<dbReference type="InterPro" id="IPR008162">
    <property type="entry name" value="Pyrophosphatase"/>
</dbReference>
<dbReference type="InterPro" id="IPR036649">
    <property type="entry name" value="Pyrophosphatase_sf"/>
</dbReference>
<dbReference type="NCBIfam" id="NF002317">
    <property type="entry name" value="PRK01250.1"/>
    <property type="match status" value="1"/>
</dbReference>
<dbReference type="PANTHER" id="PTHR10286">
    <property type="entry name" value="INORGANIC PYROPHOSPHATASE"/>
    <property type="match status" value="1"/>
</dbReference>
<dbReference type="Pfam" id="PF00719">
    <property type="entry name" value="Pyrophosphatase"/>
    <property type="match status" value="1"/>
</dbReference>
<dbReference type="SUPFAM" id="SSF50324">
    <property type="entry name" value="Inorganic pyrophosphatase"/>
    <property type="match status" value="1"/>
</dbReference>
<dbReference type="PROSITE" id="PS00387">
    <property type="entry name" value="PPASE"/>
    <property type="match status" value="1"/>
</dbReference>
<evidence type="ECO:0000255" key="1">
    <source>
        <dbReference type="HAMAP-Rule" id="MF_00209"/>
    </source>
</evidence>
<protein>
    <recommendedName>
        <fullName evidence="1">Inorganic pyrophosphatase</fullName>
        <ecNumber evidence="1">3.6.1.1</ecNumber>
    </recommendedName>
    <alternativeName>
        <fullName evidence="1">Pyrophosphate phospho-hydrolase</fullName>
        <shortName evidence="1">PPase</shortName>
    </alternativeName>
</protein>